<sequence>MPTVLSRMAMQLKKTAWIIPVFMVSGCSLSPAIPVIGAYYPGWFFCAIASLILTLITRRIIQRTNINLAFVGIIYTALFALYAMLFWLAFF</sequence>
<reference key="1">
    <citation type="journal article" date="2002" name="Proc. Natl. Acad. Sci. U.S.A.">
        <title>Extensive mosaic structure revealed by the complete genome sequence of uropathogenic Escherichia coli.</title>
        <authorList>
            <person name="Welch R.A."/>
            <person name="Burland V."/>
            <person name="Plunkett G. III"/>
            <person name="Redford P."/>
            <person name="Roesch P."/>
            <person name="Rasko D."/>
            <person name="Buckles E.L."/>
            <person name="Liou S.-R."/>
            <person name="Boutin A."/>
            <person name="Hackett J."/>
            <person name="Stroud D."/>
            <person name="Mayhew G.F."/>
            <person name="Rose D.J."/>
            <person name="Zhou S."/>
            <person name="Schwartz D.C."/>
            <person name="Perna N.T."/>
            <person name="Mobley H.L.T."/>
            <person name="Donnenberg M.S."/>
            <person name="Blattner F.R."/>
        </authorList>
    </citation>
    <scope>NUCLEOTIDE SEQUENCE [LARGE SCALE GENOMIC DNA]</scope>
    <source>
        <strain>CFT073 / ATCC 700928 / UPEC</strain>
    </source>
</reference>
<evidence type="ECO:0000255" key="1"/>
<evidence type="ECO:0000255" key="2">
    <source>
        <dbReference type="PROSITE-ProRule" id="PRU00303"/>
    </source>
</evidence>
<evidence type="ECO:0000305" key="3"/>
<protein>
    <recommendedName>
        <fullName>Uncharacterized protein YtcA</fullName>
    </recommendedName>
</protein>
<organism>
    <name type="scientific">Escherichia coli O6:H1 (strain CFT073 / ATCC 700928 / UPEC)</name>
    <dbReference type="NCBI Taxonomy" id="199310"/>
    <lineage>
        <taxon>Bacteria</taxon>
        <taxon>Pseudomonadati</taxon>
        <taxon>Pseudomonadota</taxon>
        <taxon>Gammaproteobacteria</taxon>
        <taxon>Enterobacterales</taxon>
        <taxon>Enterobacteriaceae</taxon>
        <taxon>Escherichia</taxon>
    </lineage>
</organism>
<accession>Q8FAX0</accession>
<comment type="subcellular location">
    <subcellularLocation>
        <location evidence="2">Cell membrane</location>
        <topology evidence="2">Lipid-anchor</topology>
    </subcellularLocation>
    <subcellularLocation>
        <location evidence="3">Membrane</location>
        <topology evidence="3">Multi-pass membrane protein</topology>
    </subcellularLocation>
</comment>
<comment type="similarity">
    <text evidence="3">Belongs to the YtcA family.</text>
</comment>
<comment type="sequence caution" evidence="3">
    <conflict type="erroneous initiation">
        <sequence resource="EMBL-CDS" id="AAN83513"/>
    </conflict>
</comment>
<feature type="signal peptide" evidence="2">
    <location>
        <begin position="1"/>
        <end position="26"/>
    </location>
</feature>
<feature type="chain" id="PRO_0000311870" description="Uncharacterized protein YtcA">
    <location>
        <begin position="27"/>
        <end position="91"/>
    </location>
</feature>
<feature type="transmembrane region" description="Helical" evidence="1">
    <location>
        <begin position="33"/>
        <end position="53"/>
    </location>
</feature>
<feature type="transmembrane region" description="Helical" evidence="1">
    <location>
        <begin position="70"/>
        <end position="90"/>
    </location>
</feature>
<feature type="lipid moiety-binding region" description="N-palmitoyl cysteine" evidence="2">
    <location>
        <position position="27"/>
    </location>
</feature>
<feature type="lipid moiety-binding region" description="S-diacylglycerol cysteine" evidence="2">
    <location>
        <position position="27"/>
    </location>
</feature>
<dbReference type="EMBL" id="AE014075">
    <property type="protein sequence ID" value="AAN83513.1"/>
    <property type="status" value="ALT_INIT"/>
    <property type="molecule type" value="Genomic_DNA"/>
</dbReference>
<dbReference type="RefSeq" id="WP_001317551.1">
    <property type="nucleotide sequence ID" value="NZ_CP051263.1"/>
</dbReference>
<dbReference type="STRING" id="199310.c5088"/>
<dbReference type="KEGG" id="ecc:c5088"/>
<dbReference type="eggNOG" id="ENOG5033AJ8">
    <property type="taxonomic scope" value="Bacteria"/>
</dbReference>
<dbReference type="HOGENOM" id="CLU_157779_1_0_6"/>
<dbReference type="Proteomes" id="UP000001410">
    <property type="component" value="Chromosome"/>
</dbReference>
<dbReference type="GO" id="GO:0005886">
    <property type="term" value="C:plasma membrane"/>
    <property type="evidence" value="ECO:0007669"/>
    <property type="project" value="UniProtKB-SubCell"/>
</dbReference>
<dbReference type="InterPro" id="IPR031381">
    <property type="entry name" value="YtcA"/>
</dbReference>
<dbReference type="Pfam" id="PF17090">
    <property type="entry name" value="Ytca"/>
    <property type="match status" value="1"/>
</dbReference>
<dbReference type="PROSITE" id="PS51257">
    <property type="entry name" value="PROKAR_LIPOPROTEIN"/>
    <property type="match status" value="1"/>
</dbReference>
<gene>
    <name type="primary">ytcA</name>
    <name type="ordered locus">c5088</name>
</gene>
<keyword id="KW-1003">Cell membrane</keyword>
<keyword id="KW-0449">Lipoprotein</keyword>
<keyword id="KW-0472">Membrane</keyword>
<keyword id="KW-0564">Palmitate</keyword>
<keyword id="KW-1185">Reference proteome</keyword>
<keyword id="KW-0732">Signal</keyword>
<keyword id="KW-0812">Transmembrane</keyword>
<keyword id="KW-1133">Transmembrane helix</keyword>
<name>YTCA_ECOL6</name>
<proteinExistence type="inferred from homology"/>